<evidence type="ECO:0000255" key="1">
    <source>
        <dbReference type="HAMAP-Rule" id="MF_01609"/>
    </source>
</evidence>
<feature type="chain" id="PRO_1000069433" description="Putative glutamate--cysteine ligase 2">
    <location>
        <begin position="1"/>
        <end position="376"/>
    </location>
</feature>
<reference key="1">
    <citation type="journal article" date="2007" name="Microbiology">
        <title>Comparative analysis of the Corynebacterium glutamicum group and complete genome sequence of strain R.</title>
        <authorList>
            <person name="Yukawa H."/>
            <person name="Omumasaba C.A."/>
            <person name="Nonaka H."/>
            <person name="Kos P."/>
            <person name="Okai N."/>
            <person name="Suzuki N."/>
            <person name="Suda M."/>
            <person name="Tsuge Y."/>
            <person name="Watanabe J."/>
            <person name="Ikeda Y."/>
            <person name="Vertes A.A."/>
            <person name="Inui M."/>
        </authorList>
    </citation>
    <scope>NUCLEOTIDE SEQUENCE [LARGE SCALE GENOMIC DNA]</scope>
    <source>
        <strain>R</strain>
    </source>
</reference>
<gene>
    <name type="ordered locus">cgR_2639</name>
</gene>
<proteinExistence type="inferred from homology"/>
<comment type="function">
    <text evidence="1">ATP-dependent carboxylate-amine ligase which exhibits weak glutamate--cysteine ligase activity.</text>
</comment>
<comment type="catalytic activity">
    <reaction evidence="1">
        <text>L-cysteine + L-glutamate + ATP = gamma-L-glutamyl-L-cysteine + ADP + phosphate + H(+)</text>
        <dbReference type="Rhea" id="RHEA:13285"/>
        <dbReference type="ChEBI" id="CHEBI:15378"/>
        <dbReference type="ChEBI" id="CHEBI:29985"/>
        <dbReference type="ChEBI" id="CHEBI:30616"/>
        <dbReference type="ChEBI" id="CHEBI:35235"/>
        <dbReference type="ChEBI" id="CHEBI:43474"/>
        <dbReference type="ChEBI" id="CHEBI:58173"/>
        <dbReference type="ChEBI" id="CHEBI:456216"/>
        <dbReference type="EC" id="6.3.2.2"/>
    </reaction>
</comment>
<comment type="similarity">
    <text evidence="1">Belongs to the glutamate--cysteine ligase type 2 family. YbdK subfamily.</text>
</comment>
<organism>
    <name type="scientific">Corynebacterium glutamicum (strain R)</name>
    <dbReference type="NCBI Taxonomy" id="340322"/>
    <lineage>
        <taxon>Bacteria</taxon>
        <taxon>Bacillati</taxon>
        <taxon>Actinomycetota</taxon>
        <taxon>Actinomycetes</taxon>
        <taxon>Mycobacteriales</taxon>
        <taxon>Corynebacteriaceae</taxon>
        <taxon>Corynebacterium</taxon>
    </lineage>
</organism>
<dbReference type="EC" id="6.3.2.2" evidence="1"/>
<dbReference type="EMBL" id="AP009044">
    <property type="protein sequence ID" value="BAF55654.1"/>
    <property type="molecule type" value="Genomic_DNA"/>
</dbReference>
<dbReference type="RefSeq" id="WP_003853704.1">
    <property type="nucleotide sequence ID" value="NC_009342.1"/>
</dbReference>
<dbReference type="SMR" id="A4QHD8"/>
<dbReference type="GeneID" id="1020681"/>
<dbReference type="KEGG" id="cgt:cgR_2639"/>
<dbReference type="HOGENOM" id="CLU_044848_1_0_11"/>
<dbReference type="PhylomeDB" id="A4QHD8"/>
<dbReference type="Proteomes" id="UP000006698">
    <property type="component" value="Chromosome"/>
</dbReference>
<dbReference type="GO" id="GO:0005524">
    <property type="term" value="F:ATP binding"/>
    <property type="evidence" value="ECO:0007669"/>
    <property type="project" value="UniProtKB-KW"/>
</dbReference>
<dbReference type="GO" id="GO:0004357">
    <property type="term" value="F:glutamate-cysteine ligase activity"/>
    <property type="evidence" value="ECO:0007669"/>
    <property type="project" value="UniProtKB-EC"/>
</dbReference>
<dbReference type="GO" id="GO:0042398">
    <property type="term" value="P:modified amino acid biosynthetic process"/>
    <property type="evidence" value="ECO:0007669"/>
    <property type="project" value="InterPro"/>
</dbReference>
<dbReference type="Gene3D" id="3.30.590.20">
    <property type="match status" value="1"/>
</dbReference>
<dbReference type="HAMAP" id="MF_01609">
    <property type="entry name" value="Glu_cys_ligase_2"/>
    <property type="match status" value="1"/>
</dbReference>
<dbReference type="InterPro" id="IPR050141">
    <property type="entry name" value="GCL_type2/YbdK_subfam"/>
</dbReference>
<dbReference type="InterPro" id="IPR006336">
    <property type="entry name" value="GCS2"/>
</dbReference>
<dbReference type="InterPro" id="IPR014746">
    <property type="entry name" value="Gln_synth/guanido_kin_cat_dom"/>
</dbReference>
<dbReference type="InterPro" id="IPR011793">
    <property type="entry name" value="YbdK"/>
</dbReference>
<dbReference type="NCBIfam" id="TIGR02050">
    <property type="entry name" value="gshA_cyan_rel"/>
    <property type="match status" value="1"/>
</dbReference>
<dbReference type="NCBIfam" id="NF010042">
    <property type="entry name" value="PRK13517.1-2"/>
    <property type="match status" value="1"/>
</dbReference>
<dbReference type="NCBIfam" id="NF010044">
    <property type="entry name" value="PRK13517.1-4"/>
    <property type="match status" value="1"/>
</dbReference>
<dbReference type="PANTHER" id="PTHR36510">
    <property type="entry name" value="GLUTAMATE--CYSTEINE LIGASE 2-RELATED"/>
    <property type="match status" value="1"/>
</dbReference>
<dbReference type="PANTHER" id="PTHR36510:SF1">
    <property type="entry name" value="GLUTAMATE--CYSTEINE LIGASE 2-RELATED"/>
    <property type="match status" value="1"/>
</dbReference>
<dbReference type="Pfam" id="PF04107">
    <property type="entry name" value="GCS2"/>
    <property type="match status" value="1"/>
</dbReference>
<dbReference type="SUPFAM" id="SSF55931">
    <property type="entry name" value="Glutamine synthetase/guanido kinase"/>
    <property type="match status" value="1"/>
</dbReference>
<name>GCS2_CORGB</name>
<keyword id="KW-0067">ATP-binding</keyword>
<keyword id="KW-0436">Ligase</keyword>
<keyword id="KW-0547">Nucleotide-binding</keyword>
<accession>A4QHD8</accession>
<protein>
    <recommendedName>
        <fullName evidence="1">Putative glutamate--cysteine ligase 2</fullName>
        <ecNumber evidence="1">6.3.2.2</ecNumber>
    </recommendedName>
    <alternativeName>
        <fullName evidence="1">Gamma-glutamylcysteine synthetase 2</fullName>
        <shortName evidence="1">GCS 2</shortName>
        <shortName evidence="1">Gamma-GCS 2</shortName>
    </alternativeName>
</protein>
<sequence>MGIEFKRSPRPTLGVEWEIALVDPETRDLAPRAAEILEIVAKNHPEVHLEREFLQNTVELVTGVCDTVPEAVAELSHDLDALKEAADSLGLRLWTSGSHPFSDFRENPVSEKGSYDEIIARTQYWGNQMLIWGIHVHVGISHEDRVWPIINALLTNYPHLLALSASSPAWDGLDTGYASNRTMLYQQLPTAGLPYQFQSWDEWCSYMADQDKSGVINHTGSMHFDIRPASKWGTIEVRVADSTSNLRELSAIVALTHCLVVHYDRMIDAGEELPSLQQWHVSENKWRAARYGLDAEIIISRDTDEAMVQDELRRLVAQLMPLANELGCARELELVLEILERGGGYERQRRVFKETGSWKAAVDLACDELNDLKALD</sequence>